<proteinExistence type="inferred from homology"/>
<dbReference type="EC" id="2.7.1.148" evidence="1"/>
<dbReference type="EMBL" id="CP000075">
    <property type="protein sequence ID" value="AAY36001.1"/>
    <property type="molecule type" value="Genomic_DNA"/>
</dbReference>
<dbReference type="RefSeq" id="WP_011266731.1">
    <property type="nucleotide sequence ID" value="NC_007005.1"/>
</dbReference>
<dbReference type="RefSeq" id="YP_234039.1">
    <property type="nucleotide sequence ID" value="NC_007005.1"/>
</dbReference>
<dbReference type="SMR" id="Q4ZXX1"/>
<dbReference type="STRING" id="205918.Psyr_0945"/>
<dbReference type="KEGG" id="psb:Psyr_0945"/>
<dbReference type="PATRIC" id="fig|205918.7.peg.974"/>
<dbReference type="eggNOG" id="COG1947">
    <property type="taxonomic scope" value="Bacteria"/>
</dbReference>
<dbReference type="HOGENOM" id="CLU_053057_3_0_6"/>
<dbReference type="OrthoDB" id="9809438at2"/>
<dbReference type="UniPathway" id="UPA00056">
    <property type="reaction ID" value="UER00094"/>
</dbReference>
<dbReference type="Proteomes" id="UP000000426">
    <property type="component" value="Chromosome"/>
</dbReference>
<dbReference type="GO" id="GO:0050515">
    <property type="term" value="F:4-(cytidine 5'-diphospho)-2-C-methyl-D-erythritol kinase activity"/>
    <property type="evidence" value="ECO:0007669"/>
    <property type="project" value="UniProtKB-UniRule"/>
</dbReference>
<dbReference type="GO" id="GO:0005524">
    <property type="term" value="F:ATP binding"/>
    <property type="evidence" value="ECO:0007669"/>
    <property type="project" value="UniProtKB-UniRule"/>
</dbReference>
<dbReference type="GO" id="GO:0019288">
    <property type="term" value="P:isopentenyl diphosphate biosynthetic process, methylerythritol 4-phosphate pathway"/>
    <property type="evidence" value="ECO:0007669"/>
    <property type="project" value="UniProtKB-UniRule"/>
</dbReference>
<dbReference type="GO" id="GO:0016114">
    <property type="term" value="P:terpenoid biosynthetic process"/>
    <property type="evidence" value="ECO:0007669"/>
    <property type="project" value="InterPro"/>
</dbReference>
<dbReference type="FunFam" id="3.30.230.10:FF:000022">
    <property type="entry name" value="4-diphosphocytidyl-2-C-methyl-D-erythritol kinase"/>
    <property type="match status" value="1"/>
</dbReference>
<dbReference type="Gene3D" id="3.30.230.10">
    <property type="match status" value="1"/>
</dbReference>
<dbReference type="Gene3D" id="3.30.70.890">
    <property type="entry name" value="GHMP kinase, C-terminal domain"/>
    <property type="match status" value="1"/>
</dbReference>
<dbReference type="HAMAP" id="MF_00061">
    <property type="entry name" value="IspE"/>
    <property type="match status" value="1"/>
</dbReference>
<dbReference type="InterPro" id="IPR013750">
    <property type="entry name" value="GHMP_kinase_C_dom"/>
</dbReference>
<dbReference type="InterPro" id="IPR036554">
    <property type="entry name" value="GHMP_kinase_C_sf"/>
</dbReference>
<dbReference type="InterPro" id="IPR006204">
    <property type="entry name" value="GHMP_kinase_N_dom"/>
</dbReference>
<dbReference type="InterPro" id="IPR004424">
    <property type="entry name" value="IspE"/>
</dbReference>
<dbReference type="InterPro" id="IPR020568">
    <property type="entry name" value="Ribosomal_Su5_D2-typ_SF"/>
</dbReference>
<dbReference type="InterPro" id="IPR014721">
    <property type="entry name" value="Ribsml_uS5_D2-typ_fold_subgr"/>
</dbReference>
<dbReference type="NCBIfam" id="TIGR00154">
    <property type="entry name" value="ispE"/>
    <property type="match status" value="1"/>
</dbReference>
<dbReference type="PANTHER" id="PTHR43527">
    <property type="entry name" value="4-DIPHOSPHOCYTIDYL-2-C-METHYL-D-ERYTHRITOL KINASE, CHLOROPLASTIC"/>
    <property type="match status" value="1"/>
</dbReference>
<dbReference type="PANTHER" id="PTHR43527:SF2">
    <property type="entry name" value="4-DIPHOSPHOCYTIDYL-2-C-METHYL-D-ERYTHRITOL KINASE, CHLOROPLASTIC"/>
    <property type="match status" value="1"/>
</dbReference>
<dbReference type="Pfam" id="PF08544">
    <property type="entry name" value="GHMP_kinases_C"/>
    <property type="match status" value="1"/>
</dbReference>
<dbReference type="Pfam" id="PF00288">
    <property type="entry name" value="GHMP_kinases_N"/>
    <property type="match status" value="1"/>
</dbReference>
<dbReference type="PIRSF" id="PIRSF010376">
    <property type="entry name" value="IspE"/>
    <property type="match status" value="1"/>
</dbReference>
<dbReference type="SUPFAM" id="SSF55060">
    <property type="entry name" value="GHMP Kinase, C-terminal domain"/>
    <property type="match status" value="1"/>
</dbReference>
<dbReference type="SUPFAM" id="SSF54211">
    <property type="entry name" value="Ribosomal protein S5 domain 2-like"/>
    <property type="match status" value="1"/>
</dbReference>
<evidence type="ECO:0000255" key="1">
    <source>
        <dbReference type="HAMAP-Rule" id="MF_00061"/>
    </source>
</evidence>
<protein>
    <recommendedName>
        <fullName evidence="1">4-diphosphocytidyl-2-C-methyl-D-erythritol kinase</fullName>
        <shortName evidence="1">CMK</shortName>
        <ecNumber evidence="1">2.7.1.148</ecNumber>
    </recommendedName>
    <alternativeName>
        <fullName evidence="1">4-(cytidine-5'-diphospho)-2-C-methyl-D-erythritol kinase</fullName>
    </alternativeName>
</protein>
<reference key="1">
    <citation type="journal article" date="2005" name="Proc. Natl. Acad. Sci. U.S.A.">
        <title>Comparison of the complete genome sequences of Pseudomonas syringae pv. syringae B728a and pv. tomato DC3000.</title>
        <authorList>
            <person name="Feil H."/>
            <person name="Feil W.S."/>
            <person name="Chain P."/>
            <person name="Larimer F."/>
            <person name="Dibartolo G."/>
            <person name="Copeland A."/>
            <person name="Lykidis A."/>
            <person name="Trong S."/>
            <person name="Nolan M."/>
            <person name="Goltsman E."/>
            <person name="Thiel J."/>
            <person name="Malfatti S."/>
            <person name="Loper J.E."/>
            <person name="Lapidus A."/>
            <person name="Detter J.C."/>
            <person name="Land M."/>
            <person name="Richardson P.M."/>
            <person name="Kyrpides N.C."/>
            <person name="Ivanova N."/>
            <person name="Lindow S.E."/>
        </authorList>
    </citation>
    <scope>NUCLEOTIDE SEQUENCE [LARGE SCALE GENOMIC DNA]</scope>
    <source>
        <strain>B728a</strain>
    </source>
</reference>
<gene>
    <name evidence="1" type="primary">ispE</name>
    <name type="ordered locus">Psyr_0945</name>
</gene>
<accession>Q4ZXX1</accession>
<keyword id="KW-0067">ATP-binding</keyword>
<keyword id="KW-0414">Isoprene biosynthesis</keyword>
<keyword id="KW-0418">Kinase</keyword>
<keyword id="KW-0547">Nucleotide-binding</keyword>
<keyword id="KW-0808">Transferase</keyword>
<organism>
    <name type="scientific">Pseudomonas syringae pv. syringae (strain B728a)</name>
    <dbReference type="NCBI Taxonomy" id="205918"/>
    <lineage>
        <taxon>Bacteria</taxon>
        <taxon>Pseudomonadati</taxon>
        <taxon>Pseudomonadota</taxon>
        <taxon>Gammaproteobacteria</taxon>
        <taxon>Pseudomonadales</taxon>
        <taxon>Pseudomonadaceae</taxon>
        <taxon>Pseudomonas</taxon>
        <taxon>Pseudomonas syringae</taxon>
    </lineage>
</organism>
<feature type="chain" id="PRO_0000235121" description="4-diphosphocytidyl-2-C-methyl-D-erythritol kinase">
    <location>
        <begin position="1"/>
        <end position="282"/>
    </location>
</feature>
<feature type="active site" evidence="1">
    <location>
        <position position="13"/>
    </location>
</feature>
<feature type="active site" evidence="1">
    <location>
        <position position="138"/>
    </location>
</feature>
<feature type="binding site" evidence="1">
    <location>
        <begin position="96"/>
        <end position="106"/>
    </location>
    <ligand>
        <name>ATP</name>
        <dbReference type="ChEBI" id="CHEBI:30616"/>
    </ligand>
</feature>
<sequence>MSTPQLVLPAPAKLNLMLHILGRRPDGYHELQTLFQFLDYGDELGFSVREDGEIHLQTDVPGVPHDSNLIVKAARALQQQSGCTLGMDIWLEKRLPMGGGIGGGSSDAATTLLALNHLWQLGWDEDRLAQLGLTLGADVPVFVRGHAAFAEGVGEILTPVDPEEPWYLVLVPQVSVSTAEIFSDPLLTRDTPPIKVRPVPKGNSRNDCKAVVERRYPEVRNALNLLGKFTEAKLTGTGSCVFGAFPNKAEADKVSALLTETLTGFVAKGSNISMLHRKLQIL</sequence>
<name>ISPE_PSEU2</name>
<comment type="function">
    <text evidence="1">Catalyzes the phosphorylation of the position 2 hydroxy group of 4-diphosphocytidyl-2C-methyl-D-erythritol.</text>
</comment>
<comment type="catalytic activity">
    <reaction evidence="1">
        <text>4-CDP-2-C-methyl-D-erythritol + ATP = 4-CDP-2-C-methyl-D-erythritol 2-phosphate + ADP + H(+)</text>
        <dbReference type="Rhea" id="RHEA:18437"/>
        <dbReference type="ChEBI" id="CHEBI:15378"/>
        <dbReference type="ChEBI" id="CHEBI:30616"/>
        <dbReference type="ChEBI" id="CHEBI:57823"/>
        <dbReference type="ChEBI" id="CHEBI:57919"/>
        <dbReference type="ChEBI" id="CHEBI:456216"/>
        <dbReference type="EC" id="2.7.1.148"/>
    </reaction>
</comment>
<comment type="pathway">
    <text evidence="1">Isoprenoid biosynthesis; isopentenyl diphosphate biosynthesis via DXP pathway; isopentenyl diphosphate from 1-deoxy-D-xylulose 5-phosphate: step 3/6.</text>
</comment>
<comment type="similarity">
    <text evidence="1">Belongs to the GHMP kinase family. IspE subfamily.</text>
</comment>